<feature type="signal peptide" evidence="2">
    <location>
        <begin position="1"/>
        <end position="21"/>
    </location>
</feature>
<feature type="chain" id="PRO_0000239499" description="Envelope glycoprotein gp160">
    <location>
        <begin position="22"/>
        <end position="738"/>
    </location>
</feature>
<feature type="chain" id="PRO_0000038441" description="Surface protein gp120" evidence="1">
    <location>
        <begin position="22"/>
        <end position="502"/>
    </location>
</feature>
<feature type="chain" id="PRO_0000038442" description="Transmembrane protein gp41" evidence="1">
    <location>
        <begin position="503"/>
        <end position="738"/>
    </location>
</feature>
<feature type="topological domain" description="Extracellular" evidence="2">
    <location>
        <begin position="22"/>
        <end position="670"/>
    </location>
</feature>
<feature type="transmembrane region" description="Helical" evidence="2">
    <location>
        <begin position="671"/>
        <end position="691"/>
    </location>
</feature>
<feature type="topological domain" description="Cytoplasmic" evidence="2">
    <location>
        <begin position="692"/>
        <end position="738"/>
    </location>
</feature>
<feature type="region of interest" description="V1">
    <location>
        <begin position="112"/>
        <end position="152"/>
    </location>
</feature>
<feature type="region of interest" description="V2">
    <location>
        <begin position="153"/>
        <end position="196"/>
    </location>
</feature>
<feature type="region of interest" description="V3">
    <location>
        <begin position="296"/>
        <end position="328"/>
    </location>
</feature>
<feature type="region of interest" description="V4">
    <location>
        <begin position="388"/>
        <end position="411"/>
    </location>
</feature>
<feature type="region of interest" description="V5">
    <location>
        <begin position="454"/>
        <end position="460"/>
    </location>
</feature>
<feature type="region of interest" description="Fusion peptide" evidence="2">
    <location>
        <begin position="503"/>
        <end position="523"/>
    </location>
</feature>
<feature type="region of interest" description="Immunosuppression" evidence="1">
    <location>
        <begin position="566"/>
        <end position="582"/>
    </location>
</feature>
<feature type="region of interest" description="MPER; binding to GalCer" evidence="1">
    <location>
        <begin position="648"/>
        <end position="669"/>
    </location>
</feature>
<feature type="region of interest" description="Disordered" evidence="3">
    <location>
        <begin position="716"/>
        <end position="738"/>
    </location>
</feature>
<feature type="coiled-coil region" evidence="2">
    <location>
        <begin position="615"/>
        <end position="636"/>
    </location>
</feature>
<feature type="short sequence motif" description="YXXV motif; contains endocytosis signal" evidence="1">
    <location>
        <begin position="698"/>
        <end position="701"/>
    </location>
</feature>
<feature type="compositionally biased region" description="Acidic residues" evidence="3">
    <location>
        <begin position="725"/>
        <end position="738"/>
    </location>
</feature>
<feature type="site" description="Cleavage; by host furin" evidence="1">
    <location>
        <begin position="502"/>
        <end position="503"/>
    </location>
</feature>
<feature type="glycosylation site" description="N-linked (GlcNAc...) asparagine; by host" evidence="2">
    <location>
        <position position="36"/>
    </location>
</feature>
<feature type="glycosylation site" description="N-linked (GlcNAc...) asparagine; by host" evidence="2">
    <location>
        <position position="69"/>
    </location>
</feature>
<feature type="glycosylation site" description="N-linked (GlcNAc...) asparagine; by host" evidence="2">
    <location>
        <position position="113"/>
    </location>
</feature>
<feature type="glycosylation site" description="N-linked (GlcNAc...) asparagine; by host" evidence="2">
    <location>
        <position position="117"/>
    </location>
</feature>
<feature type="glycosylation site" description="N-linked (GlcNAc...) asparagine; by host" evidence="2">
    <location>
        <position position="118"/>
    </location>
</feature>
<feature type="glycosylation site" description="N-linked (GlcNAc...) asparagine; by host" evidence="2">
    <location>
        <position position="132"/>
    </location>
</feature>
<feature type="glycosylation site" description="N-linked (GlcNAc...) asparagine; by host" evidence="2">
    <location>
        <position position="141"/>
    </location>
</feature>
<feature type="glycosylation site" description="N-linked (GlcNAc...) asparagine; by host" evidence="2">
    <location>
        <position position="169"/>
    </location>
</feature>
<feature type="glycosylation site" description="N-linked (GlcNAc...) asparagine; by host" evidence="2">
    <location>
        <position position="182"/>
    </location>
</feature>
<feature type="glycosylation site" description="N-linked (GlcNAc...) asparagine; by host" evidence="2">
    <location>
        <position position="197"/>
    </location>
</feature>
<feature type="glycosylation site" description="N-linked (GlcNAc...) asparagine; by host" evidence="2">
    <location>
        <position position="229"/>
    </location>
</feature>
<feature type="glycosylation site" description="N-linked (GlcNAc...) asparagine; by host" evidence="2">
    <location>
        <position position="232"/>
    </location>
</feature>
<feature type="glycosylation site" description="N-linked (GlcNAc...) asparagine; by host" evidence="2">
    <location>
        <position position="263"/>
    </location>
</feature>
<feature type="glycosylation site" description="N-linked (GlcNAc...) asparagine; by host" evidence="2">
    <location>
        <position position="269"/>
    </location>
</feature>
<feature type="glycosylation site" description="N-linked (GlcNAc...) asparagine; by host" evidence="2">
    <location>
        <position position="280"/>
    </location>
</feature>
<feature type="glycosylation site" description="N-linked (GlcNAc...) asparagine; by host" evidence="2">
    <location>
        <position position="291"/>
    </location>
</feature>
<feature type="glycosylation site" description="N-linked (GlcNAc...) asparagine; by host" evidence="2">
    <location>
        <position position="301"/>
    </location>
</feature>
<feature type="glycosylation site" description="N-linked (GlcNAc...) asparagine; by host" evidence="2">
    <location>
        <position position="356"/>
    </location>
</feature>
<feature type="glycosylation site" description="N-linked (GlcNAc...) asparagine; by host" evidence="2">
    <location>
        <position position="362"/>
    </location>
</feature>
<feature type="glycosylation site" description="N-linked (GlcNAc...) asparagine; by host" evidence="2">
    <location>
        <position position="389"/>
    </location>
</feature>
<feature type="glycosylation site" description="N-linked (GlcNAc...) asparagine; by host" evidence="2">
    <location>
        <position position="402"/>
    </location>
</feature>
<feature type="glycosylation site" description="N-linked (GlcNAc...) asparagine; by host" evidence="2">
    <location>
        <position position="439"/>
    </location>
</feature>
<feature type="glycosylation site" description="N-linked (GlcNAc...) asparagine; by host" evidence="2">
    <location>
        <position position="454"/>
    </location>
</feature>
<feature type="glycosylation site" description="N-linked (GlcNAc...) asparagine; by host" evidence="2">
    <location>
        <position position="457"/>
    </location>
</feature>
<feature type="glycosylation site" description="N-linked (GlcNAc...) asparagine; by host" evidence="2">
    <location>
        <position position="602"/>
    </location>
</feature>
<feature type="glycosylation site" description="N-linked (GlcNAc...) asparagine; by host" evidence="2">
    <location>
        <position position="611"/>
    </location>
</feature>
<feature type="glycosylation site" description="N-linked (GlcNAc...) asparagine; by host" evidence="2">
    <location>
        <position position="627"/>
    </location>
</feature>
<feature type="disulfide bond" evidence="1">
    <location>
        <begin position="43"/>
        <end position="56"/>
    </location>
</feature>
<feature type="disulfide bond" evidence="1">
    <location>
        <begin position="100"/>
        <end position="205"/>
    </location>
</feature>
<feature type="disulfide bond" evidence="1">
    <location>
        <begin position="107"/>
        <end position="196"/>
    </location>
</feature>
<feature type="disulfide bond" evidence="1">
    <location>
        <begin position="112"/>
        <end position="153"/>
    </location>
</feature>
<feature type="disulfide bond" evidence="1">
    <location>
        <begin position="218"/>
        <end position="248"/>
    </location>
</feature>
<feature type="disulfide bond" evidence="1">
    <location>
        <begin position="228"/>
        <end position="240"/>
    </location>
</feature>
<feature type="disulfide bond" evidence="1">
    <location>
        <begin position="296"/>
        <end position="329"/>
    </location>
</feature>
<feature type="disulfide bond" evidence="1">
    <location>
        <begin position="381"/>
        <end position="438"/>
    </location>
</feature>
<feature type="disulfide bond" evidence="1">
    <location>
        <begin position="388"/>
        <end position="411"/>
    </location>
</feature>
<sequence length="738" mass="84682">MCGKSLLCVASLLASAYLVYCTQYVTVFYGVPVWRNASIPLFCATKNRDTWGTIQCKPDNDDYQEITLNVTEAFDAWDNTVTEQAVEDVWSLFETSIKPCVKLTPLCVAMSCNSTTNNTTTTGSTTGMSEINETSPSYSDNCTGLGKEEIVNCQFYMTGLERDKKKQYNETWYSKDVVCESNNTKDGKNRCYMNHCNTSVITESCDKHYWDAIKFRYCAPPGYALLRCNDTNYSGFEPKCSKVVASTCTRMMETQTSTWFGFNGTRAENRTYIYWHGRDNRTIISLNKYYNLSIHCKRPGNKTVVPITLMSGLVFHSQPINTRPRQAWCWFKGKWREAMQEVKQTLIKHPRYKGTNDTKNINFTKPGRGSDPEVAYMWTNCRGEFLYCNMTWFLNWVENRPNQTQHNYAPCHIRQIINTWHKVGKNVYLPPREGQLTCNSTVTSIIANIDVNSNQTNITFSAEVAELYRLELGDYKLIEVTPIGFAPTREKRYSSAPVRNKRGVFVLGFLGFLATAGSAMGAASLTLSAQSRTLLAGIVQQQQQLLDVVKRQQEMLRLTVWGTKNLQARVTAIEKYLKDQAQLNSWGCAFRQVCHTTVPWVNDSLSPDWNNMTWQEWEKQVRYLEANISQSLEQAQIQQEKNMYELQKLNSWDVFGNWFDLTSWIKYIQYGVYIVVGVIVLRIAIYIVQLLSRLRKGYRPVFSSPPGYLQQIHIHTDRGQPANEGTEEDDRDDDGYDL</sequence>
<dbReference type="EMBL" id="M30895">
    <property type="status" value="NOT_ANNOTATED_CDS"/>
    <property type="molecule type" value="Genomic_DNA"/>
</dbReference>
<dbReference type="SMR" id="P18040"/>
<dbReference type="GlyCosmos" id="P18040">
    <property type="glycosylation" value="27 sites, No reported glycans"/>
</dbReference>
<dbReference type="Proteomes" id="UP000007424">
    <property type="component" value="Segment"/>
</dbReference>
<dbReference type="GO" id="GO:0044175">
    <property type="term" value="C:host cell endosome membrane"/>
    <property type="evidence" value="ECO:0007669"/>
    <property type="project" value="UniProtKB-SubCell"/>
</dbReference>
<dbReference type="GO" id="GO:0020002">
    <property type="term" value="C:host cell plasma membrane"/>
    <property type="evidence" value="ECO:0007669"/>
    <property type="project" value="UniProtKB-SubCell"/>
</dbReference>
<dbReference type="GO" id="GO:0016020">
    <property type="term" value="C:membrane"/>
    <property type="evidence" value="ECO:0007669"/>
    <property type="project" value="UniProtKB-KW"/>
</dbReference>
<dbReference type="GO" id="GO:0019031">
    <property type="term" value="C:viral envelope"/>
    <property type="evidence" value="ECO:0007669"/>
    <property type="project" value="UniProtKB-KW"/>
</dbReference>
<dbReference type="GO" id="GO:0055036">
    <property type="term" value="C:virion membrane"/>
    <property type="evidence" value="ECO:0007669"/>
    <property type="project" value="UniProtKB-SubCell"/>
</dbReference>
<dbReference type="GO" id="GO:0005198">
    <property type="term" value="F:structural molecule activity"/>
    <property type="evidence" value="ECO:0007669"/>
    <property type="project" value="InterPro"/>
</dbReference>
<dbReference type="GO" id="GO:0075512">
    <property type="term" value="P:clathrin-dependent endocytosis of virus by host cell"/>
    <property type="evidence" value="ECO:0007669"/>
    <property type="project" value="UniProtKB-KW"/>
</dbReference>
<dbReference type="GO" id="GO:0039654">
    <property type="term" value="P:fusion of virus membrane with host endosome membrane"/>
    <property type="evidence" value="ECO:0007669"/>
    <property type="project" value="UniProtKB-KW"/>
</dbReference>
<dbReference type="GO" id="GO:0052170">
    <property type="term" value="P:symbiont-mediated suppression of host innate immune response"/>
    <property type="evidence" value="ECO:0007669"/>
    <property type="project" value="UniProtKB-KW"/>
</dbReference>
<dbReference type="GO" id="GO:0039587">
    <property type="term" value="P:symbiont-mediated-mediated suppression of host tetherin activity"/>
    <property type="evidence" value="ECO:0007669"/>
    <property type="project" value="UniProtKB-KW"/>
</dbReference>
<dbReference type="GO" id="GO:0019062">
    <property type="term" value="P:virion attachment to host cell"/>
    <property type="evidence" value="ECO:0007669"/>
    <property type="project" value="UniProtKB-KW"/>
</dbReference>
<dbReference type="CDD" id="cd09909">
    <property type="entry name" value="HIV-1-like_HR1-HR2"/>
    <property type="match status" value="1"/>
</dbReference>
<dbReference type="Gene3D" id="1.10.287.210">
    <property type="match status" value="1"/>
</dbReference>
<dbReference type="Gene3D" id="2.170.40.20">
    <property type="entry name" value="Human immunodeficiency virus 1, Gp160, envelope glycoprotein"/>
    <property type="match status" value="2"/>
</dbReference>
<dbReference type="InterPro" id="IPR036377">
    <property type="entry name" value="Gp120_core_sf"/>
</dbReference>
<dbReference type="InterPro" id="IPR000328">
    <property type="entry name" value="GP41-like"/>
</dbReference>
<dbReference type="InterPro" id="IPR000777">
    <property type="entry name" value="HIV1_Gp120"/>
</dbReference>
<dbReference type="Pfam" id="PF00516">
    <property type="entry name" value="GP120"/>
    <property type="match status" value="1"/>
</dbReference>
<dbReference type="Pfam" id="PF00517">
    <property type="entry name" value="GP41"/>
    <property type="match status" value="1"/>
</dbReference>
<dbReference type="SUPFAM" id="SSF56502">
    <property type="entry name" value="gp120 core"/>
    <property type="match status" value="1"/>
</dbReference>
<dbReference type="SUPFAM" id="SSF58069">
    <property type="entry name" value="Virus ectodomain"/>
    <property type="match status" value="1"/>
</dbReference>
<comment type="function">
    <text evidence="1">The surface protein gp120 (SU) attaches the virus to the host lymphoid cell by binding to the primary receptor CD4. This interaction induces a structural rearrangement creating a high affinity binding site for a chemokine coreceptor like CXCR4 and/or CCR5. This peculiar 2 stage receptor-interaction strategy allows gp120 to maintain the highly conserved coreceptor-binding site in a cryptic conformation, protected from neutralizing antibodies. Since CD4 also displays a binding site for the disulfide-isomerase P4HB/PDI, a P4HB/PDI-CD4-CXCR4-gp120 complex may form. In that complex, P4HB/PDI could reach and reduce gp120 disulfide bonds, causing major conformational changes in gp120. TXN, another PDI family member could also be involved in disulfide rearrangements in Env during fusion. These changes are transmitted to the transmembrane protein gp41 and are thought to activate its fusogenic potential by unmasking its fusion peptide (By similarity).</text>
</comment>
<comment type="function">
    <text evidence="1">The surface protein gp120 is a ligand for CD209/DC-SIGN and CLEC4M/DC-SIGNR, which are respectively found on dendritic cells (DCs), and on endothelial cells of liver sinusoids and lymph node sinuses. These interactions allow capture of viral particles at mucosal surfaces by these cells and subsequent transmission to permissive cells. DCs are professional antigen presenting cells, critical for host immunity by inducing specific immune responses against a broad variety of pathogens. They act as sentinels in various tissues where they take up antigen, process it, and present it to T-cells following migration to lymphoid organs. HIV subverts the migration properties of dendritic cells to gain access to CD4+ T-cells in lymph nodes. Virus transmission to permissive T-cells occurs either in trans (without DCs infection, through viral capture and transmission), or in cis (following DCs productive infection, through the usual CD4-gp120 interaction), thereby inducing a robust infection. In trans infection, bound virions remain infectious over days and it is proposed that they are not degraded, but protected in non-lysosomal acidic organelles within the DCs close to the cell membrane thus contributing to the viral infectious potential during DCs' migration from the periphery to the lymphoid tissues. On arrival at lymphoid tissues, intact virions recycle back to DCs' cell surface allowing virus transmission to CD4+ T-cells. Virion capture also seems to lead to MHC-II-restricted viral antigen presentation, and probably to the activation of HIV-specific CD4+ cells (By similarity).</text>
</comment>
<comment type="function">
    <text evidence="1">The transmembrane protein gp41 (TM) acts as a class I viral fusion protein. Under the current model, the protein has at least 3 conformational states: pre-fusion native state, pre-hairpin intermediate state, and post-fusion hairpin state. During fusion of viral and target intracellular membranes, the coiled coil regions (heptad repeats) assume a trimer-of-hairpins structure, positioning the fusion peptide in close proximity to the C-terminal region of the ectodomain. The formation of this structure appears to drive apposition and subsequent fusion of viral and target cell membranes. Complete fusion occurs in host cell endosomes and is dynamin-dependent, however some lipid transfer might occur at the plasma membrane. The virus undergoes clathrin-dependent internalization long before endosomal fusion, thus minimizing the surface exposure of conserved viral epitopes during fusion and reducing the efficacy of inhibitors targeting these epitopes. Membranes fusion leads to delivery of the nucleocapsid into the cytoplasm (By similarity).</text>
</comment>
<comment type="function">
    <text evidence="1">The envelope glycoprotein gp160 precursor down-modulates cell surface CD4 antigen by interacting with it in the endoplasmic reticulum and blocking its transport to the cell surface.</text>
</comment>
<comment type="function">
    <text evidence="1">The gp120-gp41 heterodimer seems to contribute to T-cell depletion during HIV-1 infection. The envelope glycoproteins expressed on the surface of infected cells induce apoptosis through an interaction with uninfected cells expressing the receptor (CD4) and the coreceptors CXCR4 or CCR5. This type of bystander killing may be obtained by at least three distinct mechanisms. First, the interaction between the 2 cells can induce cellular fusion followed by nuclear fusion within the syncytium. Syncytia are condemned to die from apoptosis. Second, the 2 interacting cells may not fuse entirely and simply exchange plasma membrane lipids, after a sort of hemifusion process, followed by rapid death. Third, it is possible that virus-infected cells, on the point of undergoing apoptosis, fuse with CD4-expressing cells, in which case apoptosis is rapidly transmitted from one cell to the other and thus occurs in a sort of contagious fashion (By similarity).</text>
</comment>
<comment type="function">
    <text evidence="1">The gp120-gp41 heterodimer allows rapid transcytosis of the virus through CD4 negative cells such as simple epithelial monolayers of the intestinal, rectal and endocervical epithelial barriers. Both gp120 and gp41 specifically recognize glycosphingolipids galactosyl-ceramide (GalCer) or 3' sulfo-galactosyl-ceramide (GalS) present in the lipid rafts structures of epithelial cells. Binding to these alternative receptors allows the rapid transcytosis of the virus through the epithelial cells. This transcytotic vesicle-mediated transport of virions from the apical side to the basolateral side of the epithelial cells does not involve infection of the cells themselves (By similarity).</text>
</comment>
<comment type="subunit">
    <molecule>Surface protein gp120</molecule>
    <text evidence="1">The mature envelope protein (Env) consists of a homotrimer of non-covalently associated gp120-gp41 heterodimers. The resulting complex protrudes from the virus surface as a spike. There seems to be as few as 10 spikes on the average virion. Interacts with human CD4, CCR5 and CXCR4, to form a P4HB/PDI-CD4-CXCR4-gp120 complex. Gp120 also interacts with the C-type lectins CD209/DC-SIGN and CLEC4M/DC-SIGNR (collectively referred to as DC-SIGN(R)). Gp120 and gp41 interact with GalCer (By similarity).</text>
</comment>
<comment type="subunit">
    <molecule>Transmembrane protein gp41</molecule>
    <text evidence="1">The mature envelope protein (Env) consists of a homotrimer of non-covalently associated gp120-gp41 heterodimers. The resulting complex protrudes from the virus surface as a spike. There seems to be as few as 10 spikes on the average virion.</text>
</comment>
<comment type="subcellular location">
    <molecule>Transmembrane protein gp41</molecule>
    <subcellularLocation>
        <location evidence="1">Virion membrane</location>
        <topology evidence="1">Single-pass type I membrane protein</topology>
    </subcellularLocation>
    <subcellularLocation>
        <location evidence="1">Host cell membrane</location>
        <topology evidence="1">Single-pass type I membrane protein</topology>
    </subcellularLocation>
    <subcellularLocation>
        <location evidence="4">Host endosome membrane</location>
        <topology evidence="4">Single-pass type I membrane protein</topology>
    </subcellularLocation>
    <text evidence="1">It is probably concentrated at the site of budding and incorporated into the virions possibly by contacts between the cytoplasmic tail of Env and the N-terminus of Gag.</text>
</comment>
<comment type="subcellular location">
    <molecule>Surface protein gp120</molecule>
    <subcellularLocation>
        <location evidence="1">Virion membrane</location>
        <topology evidence="1">Peripheral membrane protein</topology>
    </subcellularLocation>
    <subcellularLocation>
        <location evidence="1">Host cell membrane</location>
        <topology evidence="1">Peripheral membrane protein</topology>
    </subcellularLocation>
    <subcellularLocation>
        <location evidence="4">Host endosome membrane</location>
        <topology evidence="4">Peripheral membrane protein</topology>
    </subcellularLocation>
    <text evidence="1">The surface protein is not anchored to the viral envelope, but associates with the extravirion surface through its binding to TM. It is probably concentrated at the site of budding and incorporated into the virions possibly by contacts between the cytoplasmic tail of Env and the N-terminus of Gag (By similarity).</text>
</comment>
<comment type="domain">
    <text evidence="1">Some of the most genetically diverse regions of the viral genome are present in Env. They are called variable regions 1 through 5 (V1 through V5). Coreceptor usage of gp120 is determined mainly by the primary structure of the third variable region (V3) in the outer domain of gp120. Binding to CCR5 involves a region adjacent in addition to V3 (By similarity).</text>
</comment>
<comment type="domain">
    <text evidence="1">The 17 amino acids long immunosuppressive region is present in many retroviral envelope proteins. Synthetic peptides derived from this relatively conserved sequence inhibit immune function in vitro and in vivo (By similarity).</text>
</comment>
<comment type="PTM">
    <text evidence="1">Specific enzymatic cleavages in vivo yield mature proteins. Envelope glycoproteins are synthesized as an inactive precursor that is heavily N-glycosylated and processed likely by host cell furin in the Golgi to yield the mature SU and TM proteins. The cleavage site between SU and TM requires the minimal sequence [KR]-X-[KR]-R (By similarity).</text>
</comment>
<comment type="PTM">
    <text evidence="1">Palmitoylation of the transmembrane protein and of Env polyprotein (prior to its proteolytic cleavage) is essential for their association with host cell membrane lipid rafts. Palmitoylation is therefore required for envelope trafficking to classical lipid rafts, but not for viral replication (By similarity).</text>
</comment>
<comment type="miscellaneous">
    <text>Some HIV-2 isolates have been described that can infect cells independently of CD4, using CXCR4 as primary receptor. These isolates may have an exposed coreceptor binding site.</text>
</comment>
<comment type="caution">
    <text evidence="4">This envelope protein may be non-functional due to an in-frame stop codon that shortens the sequence compared to other HIV-2 envelope proteins.</text>
</comment>
<organism>
    <name type="scientific">Human immunodeficiency virus type 2 subtype A (isolate Ghana-1)</name>
    <name type="common">HIV-2</name>
    <dbReference type="NCBI Taxonomy" id="11717"/>
    <lineage>
        <taxon>Viruses</taxon>
        <taxon>Riboviria</taxon>
        <taxon>Pararnavirae</taxon>
        <taxon>Artverviricota</taxon>
        <taxon>Revtraviricetes</taxon>
        <taxon>Ortervirales</taxon>
        <taxon>Retroviridae</taxon>
        <taxon>Orthoretrovirinae</taxon>
        <taxon>Lentivirus</taxon>
        <taxon>Human immunodeficiency virus 2</taxon>
    </lineage>
</organism>
<proteinExistence type="inferred from homology"/>
<evidence type="ECO:0000250" key="1"/>
<evidence type="ECO:0000255" key="2"/>
<evidence type="ECO:0000256" key="3">
    <source>
        <dbReference type="SAM" id="MobiDB-lite"/>
    </source>
</evidence>
<evidence type="ECO:0000305" key="4"/>
<name>ENV_HV2G1</name>
<gene>
    <name type="primary">env</name>
</gene>
<protein>
    <recommendedName>
        <fullName>Envelope glycoprotein gp160</fullName>
    </recommendedName>
    <alternativeName>
        <fullName>Env polyprotein</fullName>
    </alternativeName>
    <component>
        <recommendedName>
            <fullName>Surface protein gp120</fullName>
            <shortName>SU</shortName>
        </recommendedName>
        <alternativeName>
            <fullName>Glycoprotein 120</fullName>
            <shortName>gp120</shortName>
        </alternativeName>
    </component>
    <component>
        <recommendedName>
            <fullName>Transmembrane protein gp41</fullName>
            <shortName>TM</shortName>
        </recommendedName>
        <alternativeName>
            <fullName>Glycoprotein 41</fullName>
            <shortName>gp41</shortName>
        </alternativeName>
    </component>
</protein>
<accession>P18040</accession>
<keyword id="KW-0014">AIDS</keyword>
<keyword id="KW-0053">Apoptosis</keyword>
<keyword id="KW-1165">Clathrin-mediated endocytosis of virus by host</keyword>
<keyword id="KW-0165">Cleavage on pair of basic residues</keyword>
<keyword id="KW-0175">Coiled coil</keyword>
<keyword id="KW-1015">Disulfide bond</keyword>
<keyword id="KW-1170">Fusion of virus membrane with host endosomal membrane</keyword>
<keyword id="KW-1168">Fusion of virus membrane with host membrane</keyword>
<keyword id="KW-0325">Glycoprotein</keyword>
<keyword id="KW-1032">Host cell membrane</keyword>
<keyword id="KW-1039">Host endosome</keyword>
<keyword id="KW-1043">Host membrane</keyword>
<keyword id="KW-0945">Host-virus interaction</keyword>
<keyword id="KW-1090">Inhibition of host innate immune response by virus</keyword>
<keyword id="KW-1084">Inhibition of host tetherin by virus</keyword>
<keyword id="KW-0472">Membrane</keyword>
<keyword id="KW-0732">Signal</keyword>
<keyword id="KW-0812">Transmembrane</keyword>
<keyword id="KW-1133">Transmembrane helix</keyword>
<keyword id="KW-1161">Viral attachment to host cell</keyword>
<keyword id="KW-0261">Viral envelope protein</keyword>
<keyword id="KW-0899">Viral immunoevasion</keyword>
<keyword id="KW-1162">Viral penetration into host cytoplasm</keyword>
<keyword id="KW-0946">Virion</keyword>
<keyword id="KW-1164">Virus endocytosis by host</keyword>
<keyword id="KW-1160">Virus entry into host cell</keyword>
<organismHost>
    <name type="scientific">Homo sapiens</name>
    <name type="common">Human</name>
    <dbReference type="NCBI Taxonomy" id="9606"/>
</organismHost>
<reference key="1">
    <citation type="journal article" date="1989" name="AIDS Res. Hum. Retroviruses">
        <title>Genomic divergence of HIV-2 from Ghana.</title>
        <authorList>
            <person name="Hasegawa A."/>
            <person name="Tsujimoto H."/>
            <person name="Maki N."/>
            <person name="Ishikawa K."/>
            <person name="Miura T."/>
            <person name="Fukasawa M."/>
            <person name="Miki K."/>
            <person name="Hayami M."/>
        </authorList>
    </citation>
    <scope>NUCLEOTIDE SEQUENCE [GENOMIC DNA]</scope>
</reference>
<reference key="2">
    <citation type="journal article" date="2002" name="J. Gen. Virol.">
        <title>Human immunodeficiency virus type 2.</title>
        <authorList>
            <person name="Reeves J.D."/>
            <person name="Doms R.W."/>
        </authorList>
    </citation>
    <scope>REVIEW</scope>
</reference>